<protein>
    <recommendedName>
        <fullName evidence="1">Argininosuccinate synthase</fullName>
        <ecNumber evidence="1">6.3.4.5</ecNumber>
    </recommendedName>
    <alternativeName>
        <fullName evidence="1">Citrulline--aspartate ligase</fullName>
    </alternativeName>
</protein>
<organism>
    <name type="scientific">Aeromonas salmonicida (strain A449)</name>
    <dbReference type="NCBI Taxonomy" id="382245"/>
    <lineage>
        <taxon>Bacteria</taxon>
        <taxon>Pseudomonadati</taxon>
        <taxon>Pseudomonadota</taxon>
        <taxon>Gammaproteobacteria</taxon>
        <taxon>Aeromonadales</taxon>
        <taxon>Aeromonadaceae</taxon>
        <taxon>Aeromonas</taxon>
    </lineage>
</organism>
<keyword id="KW-0028">Amino-acid biosynthesis</keyword>
<keyword id="KW-0055">Arginine biosynthesis</keyword>
<keyword id="KW-0067">ATP-binding</keyword>
<keyword id="KW-0963">Cytoplasm</keyword>
<keyword id="KW-0436">Ligase</keyword>
<keyword id="KW-0547">Nucleotide-binding</keyword>
<dbReference type="EC" id="6.3.4.5" evidence="1"/>
<dbReference type="EMBL" id="CP000644">
    <property type="protein sequence ID" value="ABO88747.1"/>
    <property type="status" value="ALT_INIT"/>
    <property type="molecule type" value="Genomic_DNA"/>
</dbReference>
<dbReference type="RefSeq" id="WP_005313759.1">
    <property type="nucleotide sequence ID" value="NC_009348.1"/>
</dbReference>
<dbReference type="SMR" id="A4SIM5"/>
<dbReference type="STRING" id="29491.GCA_000820065_01918"/>
<dbReference type="KEGG" id="asa:ASA_0581"/>
<dbReference type="eggNOG" id="COG0137">
    <property type="taxonomic scope" value="Bacteria"/>
</dbReference>
<dbReference type="HOGENOM" id="CLU_032784_4_2_6"/>
<dbReference type="UniPathway" id="UPA00068">
    <property type="reaction ID" value="UER00113"/>
</dbReference>
<dbReference type="Proteomes" id="UP000000225">
    <property type="component" value="Chromosome"/>
</dbReference>
<dbReference type="GO" id="GO:0005737">
    <property type="term" value="C:cytoplasm"/>
    <property type="evidence" value="ECO:0007669"/>
    <property type="project" value="UniProtKB-SubCell"/>
</dbReference>
<dbReference type="GO" id="GO:0004055">
    <property type="term" value="F:argininosuccinate synthase activity"/>
    <property type="evidence" value="ECO:0007669"/>
    <property type="project" value="UniProtKB-UniRule"/>
</dbReference>
<dbReference type="GO" id="GO:0005524">
    <property type="term" value="F:ATP binding"/>
    <property type="evidence" value="ECO:0007669"/>
    <property type="project" value="UniProtKB-UniRule"/>
</dbReference>
<dbReference type="GO" id="GO:0000053">
    <property type="term" value="P:argininosuccinate metabolic process"/>
    <property type="evidence" value="ECO:0007669"/>
    <property type="project" value="TreeGrafter"/>
</dbReference>
<dbReference type="GO" id="GO:0006526">
    <property type="term" value="P:L-arginine biosynthetic process"/>
    <property type="evidence" value="ECO:0007669"/>
    <property type="project" value="UniProtKB-UniRule"/>
</dbReference>
<dbReference type="GO" id="GO:0000050">
    <property type="term" value="P:urea cycle"/>
    <property type="evidence" value="ECO:0007669"/>
    <property type="project" value="TreeGrafter"/>
</dbReference>
<dbReference type="CDD" id="cd01999">
    <property type="entry name" value="ASS"/>
    <property type="match status" value="1"/>
</dbReference>
<dbReference type="FunFam" id="3.40.50.620:FF:000019">
    <property type="entry name" value="Argininosuccinate synthase"/>
    <property type="match status" value="1"/>
</dbReference>
<dbReference type="FunFam" id="3.90.1260.10:FF:000007">
    <property type="entry name" value="Argininosuccinate synthase"/>
    <property type="match status" value="1"/>
</dbReference>
<dbReference type="Gene3D" id="3.90.1260.10">
    <property type="entry name" value="Argininosuccinate synthetase, chain A, domain 2"/>
    <property type="match status" value="1"/>
</dbReference>
<dbReference type="Gene3D" id="3.40.50.620">
    <property type="entry name" value="HUPs"/>
    <property type="match status" value="1"/>
</dbReference>
<dbReference type="Gene3D" id="1.20.5.470">
    <property type="entry name" value="Single helix bin"/>
    <property type="match status" value="1"/>
</dbReference>
<dbReference type="HAMAP" id="MF_00005">
    <property type="entry name" value="Arg_succ_synth_type1"/>
    <property type="match status" value="1"/>
</dbReference>
<dbReference type="InterPro" id="IPR048268">
    <property type="entry name" value="Arginosuc_syn_C"/>
</dbReference>
<dbReference type="InterPro" id="IPR048267">
    <property type="entry name" value="Arginosuc_syn_N"/>
</dbReference>
<dbReference type="InterPro" id="IPR001518">
    <property type="entry name" value="Arginosuc_synth"/>
</dbReference>
<dbReference type="InterPro" id="IPR018223">
    <property type="entry name" value="Arginosuc_synth_CS"/>
</dbReference>
<dbReference type="InterPro" id="IPR023434">
    <property type="entry name" value="Arginosuc_synth_type_1_subfam"/>
</dbReference>
<dbReference type="InterPro" id="IPR024074">
    <property type="entry name" value="AS_cat/multimer_dom_body"/>
</dbReference>
<dbReference type="InterPro" id="IPR014729">
    <property type="entry name" value="Rossmann-like_a/b/a_fold"/>
</dbReference>
<dbReference type="NCBIfam" id="TIGR00032">
    <property type="entry name" value="argG"/>
    <property type="match status" value="1"/>
</dbReference>
<dbReference type="NCBIfam" id="NF001770">
    <property type="entry name" value="PRK00509.1"/>
    <property type="match status" value="1"/>
</dbReference>
<dbReference type="PANTHER" id="PTHR11587">
    <property type="entry name" value="ARGININOSUCCINATE SYNTHASE"/>
    <property type="match status" value="1"/>
</dbReference>
<dbReference type="PANTHER" id="PTHR11587:SF2">
    <property type="entry name" value="ARGININOSUCCINATE SYNTHASE"/>
    <property type="match status" value="1"/>
</dbReference>
<dbReference type="Pfam" id="PF20979">
    <property type="entry name" value="Arginosuc_syn_C"/>
    <property type="match status" value="1"/>
</dbReference>
<dbReference type="Pfam" id="PF00764">
    <property type="entry name" value="Arginosuc_synth"/>
    <property type="match status" value="1"/>
</dbReference>
<dbReference type="SUPFAM" id="SSF52402">
    <property type="entry name" value="Adenine nucleotide alpha hydrolases-like"/>
    <property type="match status" value="1"/>
</dbReference>
<dbReference type="SUPFAM" id="SSF69864">
    <property type="entry name" value="Argininosuccinate synthetase, C-terminal domain"/>
    <property type="match status" value="1"/>
</dbReference>
<dbReference type="PROSITE" id="PS00564">
    <property type="entry name" value="ARGININOSUCCIN_SYN_1"/>
    <property type="match status" value="1"/>
</dbReference>
<dbReference type="PROSITE" id="PS00565">
    <property type="entry name" value="ARGININOSUCCIN_SYN_2"/>
    <property type="match status" value="1"/>
</dbReference>
<gene>
    <name evidence="1" type="primary">argG</name>
    <name type="ordered locus">ASA_0581</name>
</gene>
<accession>A4SIM5</accession>
<sequence>MSGINKIVLAYSGGLDTSAIIPWLKEHYDAEIIAFVADVGQERDDLEGIEQKAIASGAVKCIVKDLREEFVKEYVYPTLKTGAVYEGTYLLGTSMARPIIAKAMVEAALAEGADAISHGCTGKGNDQVRFEGAVAALAPQLKVIAPWRLWDMRSREDLLAYLEARDIPCKATLKKIYSRDANAWHISTEGGELESTWNEPSEAVWQWTVSAEQAPNEPEYVKLTVAKGEVVAVDDQPLSPHQILTTLNERAGKHGVGRIDITENRMVGMKSRGCYETPGGTVMVAALRAVEELVLDRPTRAWREKLGAEFSHLVYDGRWFTPLCKAIVASANAIAEDLDGEVILKMYKGQVTAVQKKSPNSLYSEDFATFGADEVYDQSHAEGFIRLYTLASRIRAMKEQHQAIGGDHTHG</sequence>
<proteinExistence type="inferred from homology"/>
<reference key="1">
    <citation type="journal article" date="2008" name="BMC Genomics">
        <title>The genome of Aeromonas salmonicida subsp. salmonicida A449: insights into the evolution of a fish pathogen.</title>
        <authorList>
            <person name="Reith M.E."/>
            <person name="Singh R.K."/>
            <person name="Curtis B."/>
            <person name="Boyd J.M."/>
            <person name="Bouevitch A."/>
            <person name="Kimball J."/>
            <person name="Munholland J."/>
            <person name="Murphy C."/>
            <person name="Sarty D."/>
            <person name="Williams J."/>
            <person name="Nash J.H."/>
            <person name="Johnson S.C."/>
            <person name="Brown L.L."/>
        </authorList>
    </citation>
    <scope>NUCLEOTIDE SEQUENCE [LARGE SCALE GENOMIC DNA]</scope>
    <source>
        <strain>A449</strain>
    </source>
</reference>
<feature type="chain" id="PRO_0000321298" description="Argininosuccinate synthase">
    <location>
        <begin position="1"/>
        <end position="411"/>
    </location>
</feature>
<feature type="binding site" evidence="1">
    <location>
        <begin position="10"/>
        <end position="18"/>
    </location>
    <ligand>
        <name>ATP</name>
        <dbReference type="ChEBI" id="CHEBI:30616"/>
    </ligand>
</feature>
<feature type="binding site" evidence="1">
    <location>
        <position position="37"/>
    </location>
    <ligand>
        <name>ATP</name>
        <dbReference type="ChEBI" id="CHEBI:30616"/>
    </ligand>
</feature>
<feature type="binding site" evidence="1">
    <location>
        <position position="89"/>
    </location>
    <ligand>
        <name>L-citrulline</name>
        <dbReference type="ChEBI" id="CHEBI:57743"/>
    </ligand>
</feature>
<feature type="binding site" evidence="1">
    <location>
        <position position="94"/>
    </location>
    <ligand>
        <name>L-citrulline</name>
        <dbReference type="ChEBI" id="CHEBI:57743"/>
    </ligand>
</feature>
<feature type="binding site" evidence="1">
    <location>
        <position position="119"/>
    </location>
    <ligand>
        <name>ATP</name>
        <dbReference type="ChEBI" id="CHEBI:30616"/>
    </ligand>
</feature>
<feature type="binding site" evidence="1">
    <location>
        <position position="121"/>
    </location>
    <ligand>
        <name>L-aspartate</name>
        <dbReference type="ChEBI" id="CHEBI:29991"/>
    </ligand>
</feature>
<feature type="binding site" evidence="1">
    <location>
        <position position="125"/>
    </location>
    <ligand>
        <name>L-aspartate</name>
        <dbReference type="ChEBI" id="CHEBI:29991"/>
    </ligand>
</feature>
<feature type="binding site" evidence="1">
    <location>
        <position position="125"/>
    </location>
    <ligand>
        <name>L-citrulline</name>
        <dbReference type="ChEBI" id="CHEBI:57743"/>
    </ligand>
</feature>
<feature type="binding site" evidence="1">
    <location>
        <position position="126"/>
    </location>
    <ligand>
        <name>L-aspartate</name>
        <dbReference type="ChEBI" id="CHEBI:29991"/>
    </ligand>
</feature>
<feature type="binding site" evidence="1">
    <location>
        <position position="129"/>
    </location>
    <ligand>
        <name>L-citrulline</name>
        <dbReference type="ChEBI" id="CHEBI:57743"/>
    </ligand>
</feature>
<feature type="binding site" evidence="1">
    <location>
        <position position="178"/>
    </location>
    <ligand>
        <name>L-citrulline</name>
        <dbReference type="ChEBI" id="CHEBI:57743"/>
    </ligand>
</feature>
<feature type="binding site" evidence="1">
    <location>
        <position position="187"/>
    </location>
    <ligand>
        <name>L-citrulline</name>
        <dbReference type="ChEBI" id="CHEBI:57743"/>
    </ligand>
</feature>
<feature type="binding site" evidence="1">
    <location>
        <position position="263"/>
    </location>
    <ligand>
        <name>L-citrulline</name>
        <dbReference type="ChEBI" id="CHEBI:57743"/>
    </ligand>
</feature>
<feature type="binding site" evidence="1">
    <location>
        <position position="275"/>
    </location>
    <ligand>
        <name>L-citrulline</name>
        <dbReference type="ChEBI" id="CHEBI:57743"/>
    </ligand>
</feature>
<name>ASSY_AERS4</name>
<comment type="catalytic activity">
    <reaction evidence="1">
        <text>L-citrulline + L-aspartate + ATP = 2-(N(omega)-L-arginino)succinate + AMP + diphosphate + H(+)</text>
        <dbReference type="Rhea" id="RHEA:10932"/>
        <dbReference type="ChEBI" id="CHEBI:15378"/>
        <dbReference type="ChEBI" id="CHEBI:29991"/>
        <dbReference type="ChEBI" id="CHEBI:30616"/>
        <dbReference type="ChEBI" id="CHEBI:33019"/>
        <dbReference type="ChEBI" id="CHEBI:57472"/>
        <dbReference type="ChEBI" id="CHEBI:57743"/>
        <dbReference type="ChEBI" id="CHEBI:456215"/>
        <dbReference type="EC" id="6.3.4.5"/>
    </reaction>
</comment>
<comment type="pathway">
    <text evidence="1">Amino-acid biosynthesis; L-arginine biosynthesis; L-arginine from L-ornithine and carbamoyl phosphate: step 2/3.</text>
</comment>
<comment type="subunit">
    <text evidence="1">Homotetramer.</text>
</comment>
<comment type="subcellular location">
    <subcellularLocation>
        <location evidence="1">Cytoplasm</location>
    </subcellularLocation>
</comment>
<comment type="similarity">
    <text evidence="1">Belongs to the argininosuccinate synthase family. Type 1 subfamily.</text>
</comment>
<comment type="sequence caution" evidence="2">
    <conflict type="erroneous initiation">
        <sequence resource="EMBL-CDS" id="ABO88747"/>
    </conflict>
    <text>Extended N-terminus.</text>
</comment>
<evidence type="ECO:0000255" key="1">
    <source>
        <dbReference type="HAMAP-Rule" id="MF_00005"/>
    </source>
</evidence>
<evidence type="ECO:0000305" key="2"/>